<protein>
    <recommendedName>
        <fullName>Lipase chaperone</fullName>
    </recommendedName>
    <alternativeName>
        <fullName>Lipase activator protein</fullName>
    </alternativeName>
    <alternativeName>
        <fullName>Lipase foldase</fullName>
    </alternativeName>
    <alternativeName>
        <fullName>Lipase helper protein</fullName>
    </alternativeName>
    <alternativeName>
        <fullName>Lipase modulator</fullName>
    </alternativeName>
    <alternativeName>
        <fullName>Transcriptional activator act</fullName>
    </alternativeName>
</protein>
<accession>P25276</accession>
<sequence>MTSREGRAPLARRAVVYGVVGLAAIAGVAMWSGAGWHRATGASGESPEASVAGGSVTAPPQAAVPASTGLPPSLAGSSAPRLPLDAGGHLAKSRAVRDFFDYCLTAQSDLSAAGLDAFVMREIAAQLDGTVAQAEALDVWHRYRAYLDALAKLRDAGAADKSDLGALQLALDQRASIAYRTLGDWSQPFFGAEQWRQRYDLARLKIAQDPTLTDAQKAERLAALEQQMPADERAAQQHIDQQRAAIDQIAQLQKSGATPDAMRAQLTQTLGPEAAARVAQMQQDDASWQSRYADYAAQRTQIESAGLSPQDRDAQIAALRQRVFTRPGEAVRAASLDRGAGSAR</sequence>
<keyword id="KW-0997">Cell inner membrane</keyword>
<keyword id="KW-1003">Cell membrane</keyword>
<keyword id="KW-0143">Chaperone</keyword>
<keyword id="KW-0442">Lipid degradation</keyword>
<keyword id="KW-0443">Lipid metabolism</keyword>
<keyword id="KW-0472">Membrane</keyword>
<keyword id="KW-0812">Transmembrane</keyword>
<keyword id="KW-1133">Transmembrane helix</keyword>
<proteinExistence type="inferred from homology"/>
<dbReference type="EMBL" id="D10069">
    <property type="protein sequence ID" value="BAA00961.1"/>
    <property type="molecule type" value="Genomic_DNA"/>
</dbReference>
<dbReference type="EMBL" id="S77842">
    <property type="protein sequence ID" value="AAC60401.1"/>
    <property type="molecule type" value="Genomic_DNA"/>
</dbReference>
<dbReference type="SMR" id="P25276"/>
<dbReference type="GO" id="GO:0005886">
    <property type="term" value="C:plasma membrane"/>
    <property type="evidence" value="ECO:0007669"/>
    <property type="project" value="UniProtKB-SubCell"/>
</dbReference>
<dbReference type="GO" id="GO:0051082">
    <property type="term" value="F:unfolded protein binding"/>
    <property type="evidence" value="ECO:0007669"/>
    <property type="project" value="UniProtKB-UniRule"/>
</dbReference>
<dbReference type="GO" id="GO:0016042">
    <property type="term" value="P:lipid catabolic process"/>
    <property type="evidence" value="ECO:0007669"/>
    <property type="project" value="UniProtKB-UniRule"/>
</dbReference>
<dbReference type="GO" id="GO:0006457">
    <property type="term" value="P:protein folding"/>
    <property type="evidence" value="ECO:0007669"/>
    <property type="project" value="UniProtKB-UniRule"/>
</dbReference>
<dbReference type="HAMAP" id="MF_00790">
    <property type="entry name" value="Lipase_chap"/>
    <property type="match status" value="1"/>
</dbReference>
<dbReference type="InterPro" id="IPR004961">
    <property type="entry name" value="Lipase_chaperone"/>
</dbReference>
<dbReference type="NCBIfam" id="NF002333">
    <property type="entry name" value="PRK01294.1-1"/>
    <property type="match status" value="1"/>
</dbReference>
<dbReference type="Pfam" id="PF03280">
    <property type="entry name" value="Lipase_chap"/>
    <property type="match status" value="1"/>
</dbReference>
<dbReference type="SUPFAM" id="SSF158855">
    <property type="entry name" value="Lipase chaperone-like"/>
    <property type="match status" value="1"/>
</dbReference>
<name>LIFO_PSES5</name>
<comment type="function">
    <text evidence="1">May be involved in the folding of the extracellular lipase during its passage through the periplasm.</text>
</comment>
<comment type="subcellular location">
    <subcellularLocation>
        <location evidence="1">Cell inner membrane</location>
        <topology evidence="1">Single-pass membrane protein</topology>
        <orientation evidence="1">Periplasmic side</orientation>
    </subcellularLocation>
</comment>
<comment type="similarity">
    <text evidence="4">Belongs to the lipase chaperone family.</text>
</comment>
<evidence type="ECO:0000250" key="1"/>
<evidence type="ECO:0000255" key="2"/>
<evidence type="ECO:0000256" key="3">
    <source>
        <dbReference type="SAM" id="MobiDB-lite"/>
    </source>
</evidence>
<evidence type="ECO:0000305" key="4"/>
<reference key="1">
    <citation type="journal article" date="1991" name="Agric. Biol. Chem.">
        <title>Cloning, nucleotide sequencing, and expression in Escherichia coli of a lipase and its activator genes from Pseudomonas sp. KWI-56.</title>
        <authorList>
            <person name="Iizumi T."/>
            <person name="Nakamura K."/>
            <person name="Shimada Y."/>
            <person name="Sugihara A."/>
            <person name="Tominaga Y."/>
            <person name="Fukase T."/>
        </authorList>
    </citation>
    <scope>NUCLEOTIDE SEQUENCE [GENOMIC DNA]</scope>
</reference>
<organism>
    <name type="scientific">Pseudomonas sp. (strain KWI-56)</name>
    <dbReference type="NCBI Taxonomy" id="311"/>
    <lineage>
        <taxon>Bacteria</taxon>
        <taxon>Pseudomonadati</taxon>
        <taxon>Pseudomonadota</taxon>
    </lineage>
</organism>
<feature type="chain" id="PRO_0000218485" description="Lipase chaperone">
    <location>
        <begin position="1"/>
        <end position="344"/>
    </location>
</feature>
<feature type="transmembrane region" description="Helical" evidence="2">
    <location>
        <begin position="14"/>
        <end position="34"/>
    </location>
</feature>
<feature type="region of interest" description="Disordered" evidence="3">
    <location>
        <begin position="39"/>
        <end position="78"/>
    </location>
</feature>
<gene>
    <name type="primary">lifO</name>
    <name type="synonym">act</name>
    <name type="synonym">lipB</name>
</gene>